<evidence type="ECO:0000255" key="1">
    <source>
        <dbReference type="HAMAP-Rule" id="MF_00075"/>
    </source>
</evidence>
<proteinExistence type="inferred from homology"/>
<gene>
    <name evidence="1" type="primary">infA</name>
    <name type="ordered locus">RBAM_001640</name>
</gene>
<keyword id="KW-0963">Cytoplasm</keyword>
<keyword id="KW-0396">Initiation factor</keyword>
<keyword id="KW-0597">Phosphoprotein</keyword>
<keyword id="KW-0648">Protein biosynthesis</keyword>
<keyword id="KW-0694">RNA-binding</keyword>
<keyword id="KW-0699">rRNA-binding</keyword>
<accession>A7Z0R1</accession>
<dbReference type="EMBL" id="CP000560">
    <property type="protein sequence ID" value="ABS72587.1"/>
    <property type="molecule type" value="Genomic_DNA"/>
</dbReference>
<dbReference type="RefSeq" id="WP_003156508.1">
    <property type="nucleotide sequence ID" value="NC_009725.2"/>
</dbReference>
<dbReference type="SMR" id="A7Z0R1"/>
<dbReference type="GeneID" id="93079303"/>
<dbReference type="KEGG" id="bay:RBAM_001640"/>
<dbReference type="HOGENOM" id="CLU_151267_1_0_9"/>
<dbReference type="Proteomes" id="UP000001120">
    <property type="component" value="Chromosome"/>
</dbReference>
<dbReference type="GO" id="GO:0005829">
    <property type="term" value="C:cytosol"/>
    <property type="evidence" value="ECO:0007669"/>
    <property type="project" value="TreeGrafter"/>
</dbReference>
<dbReference type="GO" id="GO:0043022">
    <property type="term" value="F:ribosome binding"/>
    <property type="evidence" value="ECO:0007669"/>
    <property type="project" value="UniProtKB-UniRule"/>
</dbReference>
<dbReference type="GO" id="GO:0019843">
    <property type="term" value="F:rRNA binding"/>
    <property type="evidence" value="ECO:0007669"/>
    <property type="project" value="UniProtKB-UniRule"/>
</dbReference>
<dbReference type="GO" id="GO:0003743">
    <property type="term" value="F:translation initiation factor activity"/>
    <property type="evidence" value="ECO:0007669"/>
    <property type="project" value="UniProtKB-UniRule"/>
</dbReference>
<dbReference type="CDD" id="cd04451">
    <property type="entry name" value="S1_IF1"/>
    <property type="match status" value="1"/>
</dbReference>
<dbReference type="FunFam" id="2.40.50.140:FF:000002">
    <property type="entry name" value="Translation initiation factor IF-1"/>
    <property type="match status" value="1"/>
</dbReference>
<dbReference type="Gene3D" id="2.40.50.140">
    <property type="entry name" value="Nucleic acid-binding proteins"/>
    <property type="match status" value="1"/>
</dbReference>
<dbReference type="HAMAP" id="MF_00075">
    <property type="entry name" value="IF_1"/>
    <property type="match status" value="1"/>
</dbReference>
<dbReference type="InterPro" id="IPR012340">
    <property type="entry name" value="NA-bd_OB-fold"/>
</dbReference>
<dbReference type="InterPro" id="IPR006196">
    <property type="entry name" value="RNA-binding_domain_S1_IF1"/>
</dbReference>
<dbReference type="InterPro" id="IPR003029">
    <property type="entry name" value="S1_domain"/>
</dbReference>
<dbReference type="InterPro" id="IPR004368">
    <property type="entry name" value="TIF_IF1"/>
</dbReference>
<dbReference type="NCBIfam" id="TIGR00008">
    <property type="entry name" value="infA"/>
    <property type="match status" value="1"/>
</dbReference>
<dbReference type="PANTHER" id="PTHR33370">
    <property type="entry name" value="TRANSLATION INITIATION FACTOR IF-1, CHLOROPLASTIC"/>
    <property type="match status" value="1"/>
</dbReference>
<dbReference type="PANTHER" id="PTHR33370:SF1">
    <property type="entry name" value="TRANSLATION INITIATION FACTOR IF-1, CHLOROPLASTIC"/>
    <property type="match status" value="1"/>
</dbReference>
<dbReference type="Pfam" id="PF01176">
    <property type="entry name" value="eIF-1a"/>
    <property type="match status" value="1"/>
</dbReference>
<dbReference type="SMART" id="SM00316">
    <property type="entry name" value="S1"/>
    <property type="match status" value="1"/>
</dbReference>
<dbReference type="SUPFAM" id="SSF50249">
    <property type="entry name" value="Nucleic acid-binding proteins"/>
    <property type="match status" value="1"/>
</dbReference>
<dbReference type="PROSITE" id="PS50832">
    <property type="entry name" value="S1_IF1_TYPE"/>
    <property type="match status" value="1"/>
</dbReference>
<sequence length="72" mass="8214">MAKDDVIEVEGTIVETLPNAMFKVELENGHTVLAHVSGKIRMHFIRILPGDKVTVELSPYDLTRGRITYRYK</sequence>
<feature type="chain" id="PRO_0000338765" description="Translation initiation factor IF-1">
    <location>
        <begin position="1"/>
        <end position="72"/>
    </location>
</feature>
<feature type="domain" description="S1-like" evidence="1">
    <location>
        <begin position="1"/>
        <end position="72"/>
    </location>
</feature>
<feature type="modified residue" description="Phosphotyrosine" evidence="1">
    <location>
        <position position="60"/>
    </location>
</feature>
<name>IF1_BACVZ</name>
<comment type="function">
    <text evidence="1">One of the essential components for the initiation of protein synthesis. Stabilizes the binding of IF-2 and IF-3 on the 30S subunit to which N-formylmethionyl-tRNA(fMet) subsequently binds. Helps modulate mRNA selection, yielding the 30S pre-initiation complex (PIC). Upon addition of the 50S ribosomal subunit IF-1, IF-2 and IF-3 are released leaving the mature 70S translation initiation complex.</text>
</comment>
<comment type="subunit">
    <text evidence="1">Component of the 30S ribosomal translation pre-initiation complex which assembles on the 30S ribosome in the order IF-2 and IF-3, IF-1 and N-formylmethionyl-tRNA(fMet); mRNA recruitment can occur at any time during PIC assembly.</text>
</comment>
<comment type="subcellular location">
    <subcellularLocation>
        <location evidence="1">Cytoplasm</location>
    </subcellularLocation>
</comment>
<comment type="similarity">
    <text evidence="1">Belongs to the IF-1 family.</text>
</comment>
<reference key="1">
    <citation type="journal article" date="2007" name="Nat. Biotechnol.">
        <title>Comparative analysis of the complete genome sequence of the plant growth-promoting bacterium Bacillus amyloliquefaciens FZB42.</title>
        <authorList>
            <person name="Chen X.H."/>
            <person name="Koumoutsi A."/>
            <person name="Scholz R."/>
            <person name="Eisenreich A."/>
            <person name="Schneider K."/>
            <person name="Heinemeyer I."/>
            <person name="Morgenstern B."/>
            <person name="Voss B."/>
            <person name="Hess W.R."/>
            <person name="Reva O."/>
            <person name="Junge H."/>
            <person name="Voigt B."/>
            <person name="Jungblut P.R."/>
            <person name="Vater J."/>
            <person name="Suessmuth R."/>
            <person name="Liesegang H."/>
            <person name="Strittmatter A."/>
            <person name="Gottschalk G."/>
            <person name="Borriss R."/>
        </authorList>
    </citation>
    <scope>NUCLEOTIDE SEQUENCE [LARGE SCALE GENOMIC DNA]</scope>
    <source>
        <strain>DSM 23117 / BGSC 10A6 / LMG 26770 / FZB42</strain>
    </source>
</reference>
<protein>
    <recommendedName>
        <fullName evidence="1">Translation initiation factor IF-1</fullName>
    </recommendedName>
</protein>
<organism>
    <name type="scientific">Bacillus velezensis (strain DSM 23117 / BGSC 10A6 / LMG 26770 / FZB42)</name>
    <name type="common">Bacillus amyloliquefaciens subsp. plantarum</name>
    <dbReference type="NCBI Taxonomy" id="326423"/>
    <lineage>
        <taxon>Bacteria</taxon>
        <taxon>Bacillati</taxon>
        <taxon>Bacillota</taxon>
        <taxon>Bacilli</taxon>
        <taxon>Bacillales</taxon>
        <taxon>Bacillaceae</taxon>
        <taxon>Bacillus</taxon>
        <taxon>Bacillus amyloliquefaciens group</taxon>
    </lineage>
</organism>